<sequence length="102" mass="11263">MYAVIKTGGKQYKVSEGDLVKIEKIEGAVGDTIELDEVLMVGGEEVKIGTPLLPGAKVTARIVQQGKDKKVLVFHSKRRKGYRKTYGHRQPITRLQITGIEA</sequence>
<name>RL21_SYNC1</name>
<protein>
    <recommendedName>
        <fullName evidence="1">Large ribosomal subunit protein bL21</fullName>
    </recommendedName>
    <alternativeName>
        <fullName evidence="2">50S ribosomal protein L21</fullName>
    </alternativeName>
</protein>
<keyword id="KW-1185">Reference proteome</keyword>
<keyword id="KW-0687">Ribonucleoprotein</keyword>
<keyword id="KW-0689">Ribosomal protein</keyword>
<keyword id="KW-0694">RNA-binding</keyword>
<keyword id="KW-0699">rRNA-binding</keyword>
<accession>Q3A1D6</accession>
<organism>
    <name type="scientific">Syntrophotalea carbinolica (strain DSM 2380 / NBRC 103641 / GraBd1)</name>
    <name type="common">Pelobacter carbinolicus</name>
    <dbReference type="NCBI Taxonomy" id="338963"/>
    <lineage>
        <taxon>Bacteria</taxon>
        <taxon>Pseudomonadati</taxon>
        <taxon>Thermodesulfobacteriota</taxon>
        <taxon>Desulfuromonadia</taxon>
        <taxon>Desulfuromonadales</taxon>
        <taxon>Syntrophotaleaceae</taxon>
        <taxon>Syntrophotalea</taxon>
    </lineage>
</organism>
<feature type="chain" id="PRO_0000269355" description="Large ribosomal subunit protein bL21">
    <location>
        <begin position="1"/>
        <end position="102"/>
    </location>
</feature>
<proteinExistence type="inferred from homology"/>
<comment type="function">
    <text evidence="1">This protein binds to 23S rRNA in the presence of protein L20.</text>
</comment>
<comment type="subunit">
    <text evidence="1">Part of the 50S ribosomal subunit. Contacts protein L20.</text>
</comment>
<comment type="similarity">
    <text evidence="1">Belongs to the bacterial ribosomal protein bL21 family.</text>
</comment>
<reference key="1">
    <citation type="submission" date="2005-10" db="EMBL/GenBank/DDBJ databases">
        <title>Complete sequence of Pelobacter carbinolicus DSM 2380.</title>
        <authorList>
            <person name="Copeland A."/>
            <person name="Lucas S."/>
            <person name="Lapidus A."/>
            <person name="Barry K."/>
            <person name="Detter J.C."/>
            <person name="Glavina T."/>
            <person name="Hammon N."/>
            <person name="Israni S."/>
            <person name="Pitluck S."/>
            <person name="Chertkov O."/>
            <person name="Schmutz J."/>
            <person name="Larimer F."/>
            <person name="Land M."/>
            <person name="Kyrpides N."/>
            <person name="Ivanova N."/>
            <person name="Richardson P."/>
        </authorList>
    </citation>
    <scope>NUCLEOTIDE SEQUENCE [LARGE SCALE GENOMIC DNA]</scope>
    <source>
        <strain>DSM 2380 / NBRC 103641 / GraBd1</strain>
    </source>
</reference>
<gene>
    <name evidence="1" type="primary">rplU</name>
    <name type="ordered locus">Pcar_2583</name>
</gene>
<dbReference type="EMBL" id="CP000142">
    <property type="protein sequence ID" value="ABA89821.1"/>
    <property type="molecule type" value="Genomic_DNA"/>
</dbReference>
<dbReference type="RefSeq" id="WP_011342359.1">
    <property type="nucleotide sequence ID" value="NC_007498.2"/>
</dbReference>
<dbReference type="SMR" id="Q3A1D6"/>
<dbReference type="STRING" id="338963.Pcar_2583"/>
<dbReference type="KEGG" id="pca:Pcar_2583"/>
<dbReference type="eggNOG" id="COG0261">
    <property type="taxonomic scope" value="Bacteria"/>
</dbReference>
<dbReference type="HOGENOM" id="CLU_061463_3_2_7"/>
<dbReference type="OrthoDB" id="9813334at2"/>
<dbReference type="Proteomes" id="UP000002534">
    <property type="component" value="Chromosome"/>
</dbReference>
<dbReference type="GO" id="GO:0005737">
    <property type="term" value="C:cytoplasm"/>
    <property type="evidence" value="ECO:0007669"/>
    <property type="project" value="UniProtKB-ARBA"/>
</dbReference>
<dbReference type="GO" id="GO:1990904">
    <property type="term" value="C:ribonucleoprotein complex"/>
    <property type="evidence" value="ECO:0007669"/>
    <property type="project" value="UniProtKB-KW"/>
</dbReference>
<dbReference type="GO" id="GO:0005840">
    <property type="term" value="C:ribosome"/>
    <property type="evidence" value="ECO:0007669"/>
    <property type="project" value="UniProtKB-KW"/>
</dbReference>
<dbReference type="GO" id="GO:0019843">
    <property type="term" value="F:rRNA binding"/>
    <property type="evidence" value="ECO:0007669"/>
    <property type="project" value="UniProtKB-UniRule"/>
</dbReference>
<dbReference type="GO" id="GO:0003735">
    <property type="term" value="F:structural constituent of ribosome"/>
    <property type="evidence" value="ECO:0007669"/>
    <property type="project" value="InterPro"/>
</dbReference>
<dbReference type="GO" id="GO:0006412">
    <property type="term" value="P:translation"/>
    <property type="evidence" value="ECO:0007669"/>
    <property type="project" value="UniProtKB-UniRule"/>
</dbReference>
<dbReference type="HAMAP" id="MF_01363">
    <property type="entry name" value="Ribosomal_bL21"/>
    <property type="match status" value="1"/>
</dbReference>
<dbReference type="InterPro" id="IPR028909">
    <property type="entry name" value="bL21-like"/>
</dbReference>
<dbReference type="InterPro" id="IPR036164">
    <property type="entry name" value="bL21-like_sf"/>
</dbReference>
<dbReference type="InterPro" id="IPR001787">
    <property type="entry name" value="Ribosomal_bL21"/>
</dbReference>
<dbReference type="NCBIfam" id="TIGR00061">
    <property type="entry name" value="L21"/>
    <property type="match status" value="1"/>
</dbReference>
<dbReference type="PANTHER" id="PTHR21349">
    <property type="entry name" value="50S RIBOSOMAL PROTEIN L21"/>
    <property type="match status" value="1"/>
</dbReference>
<dbReference type="PANTHER" id="PTHR21349:SF0">
    <property type="entry name" value="LARGE RIBOSOMAL SUBUNIT PROTEIN BL21M"/>
    <property type="match status" value="1"/>
</dbReference>
<dbReference type="Pfam" id="PF00829">
    <property type="entry name" value="Ribosomal_L21p"/>
    <property type="match status" value="1"/>
</dbReference>
<dbReference type="SUPFAM" id="SSF141091">
    <property type="entry name" value="L21p-like"/>
    <property type="match status" value="1"/>
</dbReference>
<evidence type="ECO:0000255" key="1">
    <source>
        <dbReference type="HAMAP-Rule" id="MF_01363"/>
    </source>
</evidence>
<evidence type="ECO:0000305" key="2"/>